<comment type="function">
    <text evidence="1">Carrier of the growing fatty acid chain in fatty acid biosynthesis.</text>
</comment>
<comment type="pathway">
    <text evidence="1">Lipid metabolism; fatty acid biosynthesis.</text>
</comment>
<comment type="subcellular location">
    <subcellularLocation>
        <location evidence="1">Cytoplasm</location>
    </subcellularLocation>
</comment>
<comment type="PTM">
    <text evidence="1">4'-phosphopantetheine is transferred from CoA to a specific serine of apo-ACP by AcpS. This modification is essential for activity because fatty acids are bound in thioester linkage to the sulfhydryl of the prosthetic group.</text>
</comment>
<comment type="similarity">
    <text evidence="1">Belongs to the acyl carrier protein (ACP) family.</text>
</comment>
<protein>
    <recommendedName>
        <fullName evidence="1">Acyl carrier protein</fullName>
        <shortName evidence="1">ACP</shortName>
    </recommendedName>
</protein>
<proteinExistence type="inferred from homology"/>
<reference key="1">
    <citation type="submission" date="2006-03" db="EMBL/GenBank/DDBJ databases">
        <title>Complete genome sequence of Gemmatimonas aurantiaca T-27 that represents a novel phylum Gemmatimonadetes.</title>
        <authorList>
            <person name="Takasaki K."/>
            <person name="Ichikawa N."/>
            <person name="Miura H."/>
            <person name="Matsushita S."/>
            <person name="Watanabe Y."/>
            <person name="Oguchi A."/>
            <person name="Ankai A."/>
            <person name="Yashiro I."/>
            <person name="Takahashi M."/>
            <person name="Terui Y."/>
            <person name="Fukui S."/>
            <person name="Yokoyama H."/>
            <person name="Tanikawa S."/>
            <person name="Hanada S."/>
            <person name="Kamagata Y."/>
            <person name="Fujita N."/>
        </authorList>
    </citation>
    <scope>NUCLEOTIDE SEQUENCE [LARGE SCALE GENOMIC DNA]</scope>
    <source>
        <strain>DSM 14586 / JCM 11422 / NBRC 100505 / T-27</strain>
    </source>
</reference>
<gene>
    <name evidence="1" type="primary">acpP</name>
    <name type="ordered locus">GAU_1636</name>
</gene>
<feature type="chain" id="PRO_1000213910" description="Acyl carrier protein">
    <location>
        <begin position="1"/>
        <end position="79"/>
    </location>
</feature>
<feature type="domain" description="Carrier" evidence="2">
    <location>
        <begin position="2"/>
        <end position="77"/>
    </location>
</feature>
<feature type="modified residue" description="O-(pantetheine 4'-phosphoryl)serine" evidence="2">
    <location>
        <position position="37"/>
    </location>
</feature>
<accession>C1A8W8</accession>
<sequence>MADHASKIKDIIEKELGVEREKLTPEASFIEDLGADSLDIVELVMEFEKEFNIDIPDEDAEKLRTVGDAVAYLEAKVGG</sequence>
<evidence type="ECO:0000255" key="1">
    <source>
        <dbReference type="HAMAP-Rule" id="MF_01217"/>
    </source>
</evidence>
<evidence type="ECO:0000255" key="2">
    <source>
        <dbReference type="PROSITE-ProRule" id="PRU00258"/>
    </source>
</evidence>
<keyword id="KW-0963">Cytoplasm</keyword>
<keyword id="KW-0275">Fatty acid biosynthesis</keyword>
<keyword id="KW-0276">Fatty acid metabolism</keyword>
<keyword id="KW-0444">Lipid biosynthesis</keyword>
<keyword id="KW-0443">Lipid metabolism</keyword>
<keyword id="KW-0596">Phosphopantetheine</keyword>
<keyword id="KW-0597">Phosphoprotein</keyword>
<keyword id="KW-1185">Reference proteome</keyword>
<dbReference type="EMBL" id="AP009153">
    <property type="protein sequence ID" value="BAH38678.1"/>
    <property type="molecule type" value="Genomic_DNA"/>
</dbReference>
<dbReference type="RefSeq" id="WP_012683125.1">
    <property type="nucleotide sequence ID" value="NC_012489.1"/>
</dbReference>
<dbReference type="SMR" id="C1A8W8"/>
<dbReference type="STRING" id="379066.GAU_1636"/>
<dbReference type="KEGG" id="gau:GAU_1636"/>
<dbReference type="eggNOG" id="COG0236">
    <property type="taxonomic scope" value="Bacteria"/>
</dbReference>
<dbReference type="HOGENOM" id="CLU_108696_5_1_0"/>
<dbReference type="OrthoDB" id="9804551at2"/>
<dbReference type="UniPathway" id="UPA00094"/>
<dbReference type="Proteomes" id="UP000002209">
    <property type="component" value="Chromosome"/>
</dbReference>
<dbReference type="GO" id="GO:0005829">
    <property type="term" value="C:cytosol"/>
    <property type="evidence" value="ECO:0007669"/>
    <property type="project" value="TreeGrafter"/>
</dbReference>
<dbReference type="GO" id="GO:0016020">
    <property type="term" value="C:membrane"/>
    <property type="evidence" value="ECO:0007669"/>
    <property type="project" value="GOC"/>
</dbReference>
<dbReference type="GO" id="GO:0000035">
    <property type="term" value="F:acyl binding"/>
    <property type="evidence" value="ECO:0007669"/>
    <property type="project" value="TreeGrafter"/>
</dbReference>
<dbReference type="GO" id="GO:0000036">
    <property type="term" value="F:acyl carrier activity"/>
    <property type="evidence" value="ECO:0007669"/>
    <property type="project" value="UniProtKB-UniRule"/>
</dbReference>
<dbReference type="GO" id="GO:0009245">
    <property type="term" value="P:lipid A biosynthetic process"/>
    <property type="evidence" value="ECO:0007669"/>
    <property type="project" value="TreeGrafter"/>
</dbReference>
<dbReference type="FunFam" id="1.10.1200.10:FF:000003">
    <property type="entry name" value="Acyl carrier protein"/>
    <property type="match status" value="1"/>
</dbReference>
<dbReference type="Gene3D" id="1.10.1200.10">
    <property type="entry name" value="ACP-like"/>
    <property type="match status" value="1"/>
</dbReference>
<dbReference type="HAMAP" id="MF_01217">
    <property type="entry name" value="Acyl_carrier"/>
    <property type="match status" value="1"/>
</dbReference>
<dbReference type="InterPro" id="IPR003231">
    <property type="entry name" value="ACP"/>
</dbReference>
<dbReference type="InterPro" id="IPR036736">
    <property type="entry name" value="ACP-like_sf"/>
</dbReference>
<dbReference type="InterPro" id="IPR009081">
    <property type="entry name" value="PP-bd_ACP"/>
</dbReference>
<dbReference type="InterPro" id="IPR006162">
    <property type="entry name" value="Ppantetheine_attach_site"/>
</dbReference>
<dbReference type="NCBIfam" id="TIGR00517">
    <property type="entry name" value="acyl_carrier"/>
    <property type="match status" value="1"/>
</dbReference>
<dbReference type="NCBIfam" id="NF002148">
    <property type="entry name" value="PRK00982.1-2"/>
    <property type="match status" value="1"/>
</dbReference>
<dbReference type="NCBIfam" id="NF002150">
    <property type="entry name" value="PRK00982.1-4"/>
    <property type="match status" value="1"/>
</dbReference>
<dbReference type="NCBIfam" id="NF002151">
    <property type="entry name" value="PRK00982.1-5"/>
    <property type="match status" value="1"/>
</dbReference>
<dbReference type="PANTHER" id="PTHR20863">
    <property type="entry name" value="ACYL CARRIER PROTEIN"/>
    <property type="match status" value="1"/>
</dbReference>
<dbReference type="PANTHER" id="PTHR20863:SF76">
    <property type="entry name" value="CARRIER DOMAIN-CONTAINING PROTEIN"/>
    <property type="match status" value="1"/>
</dbReference>
<dbReference type="Pfam" id="PF00550">
    <property type="entry name" value="PP-binding"/>
    <property type="match status" value="1"/>
</dbReference>
<dbReference type="SUPFAM" id="SSF47336">
    <property type="entry name" value="ACP-like"/>
    <property type="match status" value="1"/>
</dbReference>
<dbReference type="PROSITE" id="PS50075">
    <property type="entry name" value="CARRIER"/>
    <property type="match status" value="1"/>
</dbReference>
<dbReference type="PROSITE" id="PS00012">
    <property type="entry name" value="PHOSPHOPANTETHEINE"/>
    <property type="match status" value="1"/>
</dbReference>
<name>ACP_GEMAT</name>
<organism>
    <name type="scientific">Gemmatimonas aurantiaca (strain DSM 14586 / JCM 11422 / NBRC 100505 / T-27)</name>
    <dbReference type="NCBI Taxonomy" id="379066"/>
    <lineage>
        <taxon>Bacteria</taxon>
        <taxon>Pseudomonadati</taxon>
        <taxon>Gemmatimonadota</taxon>
        <taxon>Gemmatimonadia</taxon>
        <taxon>Gemmatimonadales</taxon>
        <taxon>Gemmatimonadaceae</taxon>
        <taxon>Gemmatimonas</taxon>
    </lineage>
</organism>